<organism>
    <name type="scientific">Lactobacillus delbrueckii subsp. bulgaricus (strain ATCC 11842 / DSM 20081 / BCRC 10696 / JCM 1002 / NBRC 13953 / NCIMB 11778 / NCTC 12712 / WDCM 00102 / Lb 14)</name>
    <dbReference type="NCBI Taxonomy" id="390333"/>
    <lineage>
        <taxon>Bacteria</taxon>
        <taxon>Bacillati</taxon>
        <taxon>Bacillota</taxon>
        <taxon>Bacilli</taxon>
        <taxon>Lactobacillales</taxon>
        <taxon>Lactobacillaceae</taxon>
        <taxon>Lactobacillus</taxon>
    </lineage>
</organism>
<accession>Q1GAB0</accession>
<keyword id="KW-0067">ATP-binding</keyword>
<keyword id="KW-0227">DNA damage</keyword>
<keyword id="KW-0234">DNA repair</keyword>
<keyword id="KW-0238">DNA-binding</keyword>
<keyword id="KW-0269">Exonuclease</keyword>
<keyword id="KW-0347">Helicase</keyword>
<keyword id="KW-0378">Hydrolase</keyword>
<keyword id="KW-0540">Nuclease</keyword>
<keyword id="KW-0547">Nucleotide-binding</keyword>
<keyword id="KW-1185">Reference proteome</keyword>
<protein>
    <recommendedName>
        <fullName evidence="1">ATP-dependent helicase/deoxyribonuclease subunit B</fullName>
        <ecNumber evidence="1">3.1.-.-</ecNumber>
    </recommendedName>
    <alternativeName>
        <fullName evidence="1">ATP-dependent helicase/nuclease subunit RexB</fullName>
    </alternativeName>
</protein>
<dbReference type="EC" id="3.1.-.-" evidence="1"/>
<dbReference type="EMBL" id="CR954253">
    <property type="protein sequence ID" value="CAI97802.1"/>
    <property type="molecule type" value="Genomic_DNA"/>
</dbReference>
<dbReference type="RefSeq" id="WP_011543868.1">
    <property type="nucleotide sequence ID" value="NC_008054.1"/>
</dbReference>
<dbReference type="SMR" id="Q1GAB0"/>
<dbReference type="STRING" id="390333.Ldb1000"/>
<dbReference type="KEGG" id="ldb:Ldb1000"/>
<dbReference type="PATRIC" id="fig|390333.7.peg.903"/>
<dbReference type="eggNOG" id="COG3857">
    <property type="taxonomic scope" value="Bacteria"/>
</dbReference>
<dbReference type="HOGENOM" id="CLU_007838_0_0_9"/>
<dbReference type="BioCyc" id="LDEL390333:LDB_RS04375-MONOMER"/>
<dbReference type="Proteomes" id="UP000001259">
    <property type="component" value="Chromosome"/>
</dbReference>
<dbReference type="GO" id="GO:0008409">
    <property type="term" value="F:5'-3' exonuclease activity"/>
    <property type="evidence" value="ECO:0007669"/>
    <property type="project" value="UniProtKB-UniRule"/>
</dbReference>
<dbReference type="GO" id="GO:0005524">
    <property type="term" value="F:ATP binding"/>
    <property type="evidence" value="ECO:0007669"/>
    <property type="project" value="UniProtKB-UniRule"/>
</dbReference>
<dbReference type="GO" id="GO:0003690">
    <property type="term" value="F:double-stranded DNA binding"/>
    <property type="evidence" value="ECO:0007669"/>
    <property type="project" value="UniProtKB-UniRule"/>
</dbReference>
<dbReference type="GO" id="GO:0004386">
    <property type="term" value="F:helicase activity"/>
    <property type="evidence" value="ECO:0007669"/>
    <property type="project" value="UniProtKB-KW"/>
</dbReference>
<dbReference type="GO" id="GO:0016817">
    <property type="term" value="F:hydrolase activity, acting on acid anhydrides"/>
    <property type="evidence" value="ECO:0007669"/>
    <property type="project" value="InterPro"/>
</dbReference>
<dbReference type="GO" id="GO:0000724">
    <property type="term" value="P:double-strand break repair via homologous recombination"/>
    <property type="evidence" value="ECO:0007669"/>
    <property type="project" value="UniProtKB-UniRule"/>
</dbReference>
<dbReference type="Gene3D" id="3.40.50.300">
    <property type="entry name" value="P-loop containing nucleotide triphosphate hydrolases"/>
    <property type="match status" value="4"/>
</dbReference>
<dbReference type="HAMAP" id="MF_01453">
    <property type="entry name" value="AddB_type2"/>
    <property type="match status" value="1"/>
</dbReference>
<dbReference type="InterPro" id="IPR049035">
    <property type="entry name" value="ADDB_N"/>
</dbReference>
<dbReference type="InterPro" id="IPR014141">
    <property type="entry name" value="DNA_helicase_suRexB"/>
</dbReference>
<dbReference type="InterPro" id="IPR027417">
    <property type="entry name" value="P-loop_NTPase"/>
</dbReference>
<dbReference type="InterPro" id="IPR038726">
    <property type="entry name" value="PDDEXK_AddAB-type"/>
</dbReference>
<dbReference type="InterPro" id="IPR011335">
    <property type="entry name" value="Restrct_endonuc-II-like"/>
</dbReference>
<dbReference type="PANTHER" id="PTHR30591">
    <property type="entry name" value="RECBCD ENZYME SUBUNIT RECC"/>
    <property type="match status" value="1"/>
</dbReference>
<dbReference type="PANTHER" id="PTHR30591:SF1">
    <property type="entry name" value="RECBCD ENZYME SUBUNIT RECC"/>
    <property type="match status" value="1"/>
</dbReference>
<dbReference type="Pfam" id="PF21445">
    <property type="entry name" value="ADDB_N"/>
    <property type="match status" value="1"/>
</dbReference>
<dbReference type="Pfam" id="PF12705">
    <property type="entry name" value="PDDEXK_1"/>
    <property type="match status" value="1"/>
</dbReference>
<dbReference type="SUPFAM" id="SSF52540">
    <property type="entry name" value="P-loop containing nucleoside triphosphate hydrolases"/>
    <property type="match status" value="1"/>
</dbReference>
<dbReference type="SUPFAM" id="SSF52980">
    <property type="entry name" value="Restriction endonuclease-like"/>
    <property type="match status" value="1"/>
</dbReference>
<name>ADDB_LACDA</name>
<sequence>MIKIITGRQSDPLQTEIIGRAARNYLAQPGKDTFIIVPNHIKFNTEVAAIGKVAQLQGREETSVKNLHVLSFSRLAWFFFKKADLLMPESLDDAAATMILEQIIDKRRDELLLFKNSHANSGMIKQVYSTILQVHTGQLDLGNLLERAADPAVALDLDNETRDKLHDLDLIYQDFLEIVSEKHFATKDELNIQLNQLLASRPDLVSQASFYVTDFSHFSIQEKMTMQLLAAFASEMTFAFKTADGSVIEPAAGEYDYVVQKTIKDLTGYFSAHDFAWEREKIASPASPARDLNQAWQGQGQPDLNNLQLVKADSRYAEAYFVARTIYDEVALKGCQYRDFLVLAPNLQEYETYLAPILRQNQIPFFDDLQQQMKYHPLVLLLENLGKLLQQAGDTPALLSIMKTRLLIPDWYLEGDAEAGEAAYLRDIDQLENFALAHGIKYSLWQKPLKDFTKAQVIALDQEQYQKWLDRLDKLRDFFVSKISRLARQLKSEKDSMTAVKLFFDFLVKNGVSARLEAWRLKASESGDLQQAQQPEQCWNLLLSLLKDYLLVNPENFAWADFFKMLTAAFSQANFATIPASLDAVTLSEYGMVQTSGYKQVFIIGAANGSLPQINDQPNFLTTENLASLADFFDQDAYLEDSQQLRNLDQEYQFGNALALASDRVYISYPVINSNNDLLDPSIYYKRLLKLVNGREYRQRDLPDIAEKDRTEFARQLLLFLTSPRASLGYLAYAEENSAQSPLVAKLVELSRQYEEEKAEEIAEGMAYDNNPQDISEDLAERLYGKDLLSSVSQLESYYQNSFEYFLNYGLRLRPRAENELNAIQSGNYFHRTFELLLKEMQKKNIEIDKLSELDLELLLKQVRSEILQEPLYQQFLRDPFNEYLFKVFDKTTSKVAQSYRRKQQENKMRATYGELAFGPAEKLAGLVLPLKKFAGQRKISLRGKIDRVDLFNGDQHVLGQLIDYKSSDHSFNLARFASGVDLQMIAYLDVLEKNRDLLAGGRQFDLLGAFYQYVTRKLNSVNSSSTGALFDSKLQLKENLLGGEDKLKLSGVFVSEPAWYQEVDKALEKKATSSVYRGLKLNKSGGFGKKDNFFSQDEMRELLEYVEALIEDAASEILSGQIALNPFRQGNNTGLAFSDYKDIFYFDQQLPTNSYRDLPNLKKADLLALVEKRLRQRE</sequence>
<gene>
    <name evidence="1" type="primary">rexB</name>
    <name type="ordered locus">Ldb1000</name>
</gene>
<comment type="function">
    <text evidence="1">The heterodimer acts as both an ATP-dependent DNA helicase and an ATP-dependent, dual-direction single-stranded exonuclease. Recognizes the chi site generating a DNA molecule suitable for the initiation of homologous recombination. This subunit has 5' -&gt; 3' nuclease activity but not helicase activity.</text>
</comment>
<comment type="cofactor">
    <cofactor evidence="1">
        <name>Mg(2+)</name>
        <dbReference type="ChEBI" id="CHEBI:18420"/>
    </cofactor>
</comment>
<comment type="subunit">
    <text evidence="1">Heterodimer of AddA and RexB.</text>
</comment>
<comment type="miscellaneous">
    <text evidence="1">Despite having helicase-like domains, this subunit does not have helicase activity.</text>
</comment>
<comment type="similarity">
    <text evidence="1">Belongs to the helicase family. AddB/RexB type 2 subfamily.</text>
</comment>
<feature type="chain" id="PRO_0000379369" description="ATP-dependent helicase/deoxyribonuclease subunit B">
    <location>
        <begin position="1"/>
        <end position="1179"/>
    </location>
</feature>
<evidence type="ECO:0000255" key="1">
    <source>
        <dbReference type="HAMAP-Rule" id="MF_01453"/>
    </source>
</evidence>
<proteinExistence type="inferred from homology"/>
<reference key="1">
    <citation type="journal article" date="2006" name="Proc. Natl. Acad. Sci. U.S.A.">
        <title>The complete genome sequence of Lactobacillus bulgaricus reveals extensive and ongoing reductive evolution.</title>
        <authorList>
            <person name="van de Guchte M."/>
            <person name="Penaud S."/>
            <person name="Grimaldi C."/>
            <person name="Barbe V."/>
            <person name="Bryson K."/>
            <person name="Nicolas P."/>
            <person name="Robert C."/>
            <person name="Oztas S."/>
            <person name="Mangenot S."/>
            <person name="Couloux A."/>
            <person name="Loux V."/>
            <person name="Dervyn R."/>
            <person name="Bossy R."/>
            <person name="Bolotin A."/>
            <person name="Batto J.-M."/>
            <person name="Walunas T."/>
            <person name="Gibrat J.-F."/>
            <person name="Bessieres P."/>
            <person name="Weissenbach J."/>
            <person name="Ehrlich S.D."/>
            <person name="Maguin E."/>
        </authorList>
    </citation>
    <scope>NUCLEOTIDE SEQUENCE [LARGE SCALE GENOMIC DNA]</scope>
    <source>
        <strain>ATCC 11842 / DSM 20081 / BCRC 10696 / JCM 1002 / NBRC 13953 / NCIMB 11778 / NCTC 12712 / WDCM 00102 / Lb 14</strain>
    </source>
</reference>